<accession>A0A8J9R8H5</accession>
<sequence>MFSLRSWRYTALAGDEDDLEGIDKKAFLASPLRSSSLRQRNQPKQLLLLLLRTIIVVSVITFAAIIGCWVFLSHGTTTTNPPQQCSTPAVRKEWRSLSPSAQAKYISAVQCLMYLPSVHKEGTTLYDDFVFGHSKTGSYSHYAASFLPWHRMYLHVYERALRDHCGYSESLPYWDWTLDSHHLSASPIWDPVTGFGGDGNPGGAETLHGGRCVVDGPFANSTRAWRALSEGHNHDVEYGPHCLSRGFIINNDDRTTLEMLHGLVSPSRVAQTLDKPDYIAFFEDFESGPHNAIPQFIRGDFLTFSAPNDPVFYLHHANVDRLWWLWQQRDPAGRLYQVRGPAKDFRYHEGHEVSEGSIEDVMPMGGLAEDIKMKSVMDTRAGFLCYEYE</sequence>
<dbReference type="EC" id="1.14.18.-" evidence="7"/>
<dbReference type="EMBL" id="LC646903">
    <property type="protein sequence ID" value="BDA39149.1"/>
    <property type="molecule type" value="Genomic_DNA"/>
</dbReference>
<dbReference type="SMR" id="A0A8J9R8H5"/>
<dbReference type="GO" id="GO:0016020">
    <property type="term" value="C:membrane"/>
    <property type="evidence" value="ECO:0007669"/>
    <property type="project" value="UniProtKB-SubCell"/>
</dbReference>
<dbReference type="GO" id="GO:0046872">
    <property type="term" value="F:metal ion binding"/>
    <property type="evidence" value="ECO:0007669"/>
    <property type="project" value="UniProtKB-KW"/>
</dbReference>
<dbReference type="GO" id="GO:0004497">
    <property type="term" value="F:monooxygenase activity"/>
    <property type="evidence" value="ECO:0007669"/>
    <property type="project" value="UniProtKB-KW"/>
</dbReference>
<dbReference type="Gene3D" id="1.10.1280.10">
    <property type="entry name" value="Di-copper center containing domain from catechol oxidase"/>
    <property type="match status" value="1"/>
</dbReference>
<dbReference type="InterPro" id="IPR008922">
    <property type="entry name" value="Di-copper_centre_dom_sf"/>
</dbReference>
<dbReference type="InterPro" id="IPR050316">
    <property type="entry name" value="Tyrosinase/Hemocyanin"/>
</dbReference>
<dbReference type="InterPro" id="IPR002227">
    <property type="entry name" value="Tyrosinase_Cu-bd"/>
</dbReference>
<dbReference type="PANTHER" id="PTHR11474">
    <property type="entry name" value="TYROSINASE FAMILY MEMBER"/>
    <property type="match status" value="1"/>
</dbReference>
<dbReference type="PANTHER" id="PTHR11474:SF126">
    <property type="entry name" value="TYROSINASE-LIKE PROTEIN TYR-1-RELATED"/>
    <property type="match status" value="1"/>
</dbReference>
<dbReference type="Pfam" id="PF00264">
    <property type="entry name" value="Tyrosinase"/>
    <property type="match status" value="1"/>
</dbReference>
<dbReference type="PRINTS" id="PR00092">
    <property type="entry name" value="TYROSINASE"/>
</dbReference>
<dbReference type="SUPFAM" id="SSF48056">
    <property type="entry name" value="Di-copper centre-containing domain"/>
    <property type="match status" value="1"/>
</dbReference>
<dbReference type="PROSITE" id="PS00497">
    <property type="entry name" value="TYROSINASE_1"/>
    <property type="match status" value="1"/>
</dbReference>
<dbReference type="PROSITE" id="PS00498">
    <property type="entry name" value="TYROSINASE_2"/>
    <property type="match status" value="1"/>
</dbReference>
<gene>
    <name evidence="5" type="primary">phomQ1</name>
</gene>
<evidence type="ECO:0000250" key="1">
    <source>
        <dbReference type="UniProtKB" id="Q9ZP19"/>
    </source>
</evidence>
<evidence type="ECO:0000255" key="2"/>
<evidence type="ECO:0000255" key="3">
    <source>
        <dbReference type="PROSITE-ProRule" id="PRU00498"/>
    </source>
</evidence>
<evidence type="ECO:0000269" key="4">
    <source>
    </source>
</evidence>
<evidence type="ECO:0000303" key="5">
    <source>
    </source>
</evidence>
<evidence type="ECO:0000305" key="6"/>
<evidence type="ECO:0000305" key="7">
    <source>
    </source>
</evidence>
<feature type="chain" id="PRO_0000458348" description="Tyrosinase-like protein phomQ1">
    <location>
        <begin position="1"/>
        <end position="389"/>
    </location>
</feature>
<feature type="transmembrane region" description="Helical" evidence="2">
    <location>
        <begin position="53"/>
        <end position="73"/>
    </location>
</feature>
<feature type="binding site" evidence="1">
    <location>
        <position position="141"/>
    </location>
    <ligand>
        <name>Cu cation</name>
        <dbReference type="ChEBI" id="CHEBI:23378"/>
        <label>A</label>
    </ligand>
</feature>
<feature type="binding site" evidence="1">
    <location>
        <position position="150"/>
    </location>
    <ligand>
        <name>Cu cation</name>
        <dbReference type="ChEBI" id="CHEBI:23378"/>
        <label>A</label>
    </ligand>
</feature>
<feature type="binding site" evidence="1">
    <location>
        <position position="290"/>
    </location>
    <ligand>
        <name>Cu cation</name>
        <dbReference type="ChEBI" id="CHEBI:23378"/>
        <label>B</label>
    </ligand>
</feature>
<feature type="binding site" evidence="1">
    <location>
        <position position="316"/>
    </location>
    <ligand>
        <name>Cu cation</name>
        <dbReference type="ChEBI" id="CHEBI:23378"/>
        <label>B</label>
    </ligand>
</feature>
<feature type="glycosylation site" description="N-linked (GlcNAc...) asparagine" evidence="3">
    <location>
        <position position="220"/>
    </location>
</feature>
<proteinExistence type="inferred from homology"/>
<comment type="function">
    <text evidence="4 7">Tyrosinase-like protein; part of the gene cluster that mediates the biosynthesis of the phomopsins, a group of hexapeptide mycotoxins which infects lupins and causes lupinosis disease in livestock (PubMed:34608734). Within the pathway, phomQ1 functions as a halogenase, converting (PubMed:34608734). The pathway starts with the processing of the precursor phomA by several endopeptidases including kexin proteases as well as the cluster-specific S41 family peptidase phomP1 and the oligopeptidase phomG to produce 10 identical copies of the hexapeptide Tyr-Val-Ile-Pro-Ile-Asp. After being excised from the precursor peptide, the core peptides are cyclized and modified post-translationally by enzymes encoded within the gene cluster. The timing and order of proteolysis of the phomA precursor and PTMs are still unknown. Two tyrosinase-like enzymes, phomQ1 and phomQ2, catalyze the chlorination and hydroxylation of Tyr, respectively. PhomYb, is proposed to be involved in the construction of the macrocyclic structure. The other 4 ustYa family proteins may be involved in PTMs that generate the unique structure of phomopsin A. PhomYa is required for the hydroxylation of C-beta of Tyr. PhomYc, phomYd, and phomYe are responsible for the biosynthesis of 2,3-dehydroisoleucine (dIle), 2,3-dehydroaspartic acid (dAsp), and 3,4-dehydroproline (dPro), respectively. While dIle formation by phomYc is indispensable for the installation of dAsp by phomYd, the order of the other PTMs have not been elucidated yet. Most of the biosynthetic enzymes likely have broad substrate specificity, and thus, there might be a metabolic grid from a precursor to phomopsin A. The enzyme(s) responsible for the biosynthesis of 3,4-dehydrovaline (dVal) have also not been identified yet. Finally, phomM acts as an S-adenosylmethionine-dependent alpha-N-methyltransferase that catalyzes two successive N-methylation reactions, converting N-desmethyl-phomopsin A to phomopsin A and phomopsin A further to an N,N-dimethylated congener called phomopsin E (Probable).</text>
</comment>
<comment type="cofactor">
    <cofactor evidence="1">
        <name>Cu(2+)</name>
        <dbReference type="ChEBI" id="CHEBI:29036"/>
    </cofactor>
    <text evidence="1">Binds 2 copper ions per subunit.</text>
</comment>
<comment type="pathway">
    <text evidence="4">Mycotoxin biosynthesis.</text>
</comment>
<comment type="subcellular location">
    <subcellularLocation>
        <location evidence="2">Membrane</location>
        <topology evidence="2">Single-pass membrane protein</topology>
    </subcellularLocation>
</comment>
<comment type="disruption phenotype">
    <text evidence="4">Abolishes the formation of phomopsin A and leads to the accumulation of phomopsin B, a dehalogenated derivative of phomopsin A.</text>
</comment>
<comment type="similarity">
    <text evidence="6">Belongs to the tyrosinase family.</text>
</comment>
<keyword id="KW-0186">Copper</keyword>
<keyword id="KW-0325">Glycoprotein</keyword>
<keyword id="KW-0472">Membrane</keyword>
<keyword id="KW-0479">Metal-binding</keyword>
<keyword id="KW-0503">Monooxygenase</keyword>
<keyword id="KW-0560">Oxidoreductase</keyword>
<keyword id="KW-0812">Transmembrane</keyword>
<keyword id="KW-1133">Transmembrane helix</keyword>
<organism>
    <name type="scientific">Diaporthe leptostromiformis</name>
    <name type="common">Lupinosis disease fungus</name>
    <name type="synonym">Phomopsis leptostromiformis</name>
    <dbReference type="NCBI Taxonomy" id="291059"/>
    <lineage>
        <taxon>Eukaryota</taxon>
        <taxon>Fungi</taxon>
        <taxon>Dikarya</taxon>
        <taxon>Ascomycota</taxon>
        <taxon>Pezizomycotina</taxon>
        <taxon>Sordariomycetes</taxon>
        <taxon>Sordariomycetidae</taxon>
        <taxon>Diaporthales</taxon>
        <taxon>Diaporthaceae</taxon>
        <taxon>Diaporthe</taxon>
    </lineage>
</organism>
<reference key="1">
    <citation type="journal article" date="2021" name="Angew. Chem. Int. Ed.">
        <title>Biosynthetic studies of phomopsins unveil posttranslational installation of dehydroamino acids by ustYa family proteins.</title>
        <authorList>
            <person name="Sogahata K."/>
            <person name="Ozaki T."/>
            <person name="Igarashi Y."/>
            <person name="Naganuma Y."/>
            <person name="Liu C."/>
            <person name="Minami A."/>
            <person name="Oikawa H."/>
        </authorList>
    </citation>
    <scope>NUCLEOTIDE SEQUENCE [GENOMIC DNA]</scope>
    <scope>FUNCTION</scope>
    <scope>DISRUPTION PHENOTYPE</scope>
    <scope>PATHWAY</scope>
    <source>
        <strain>ATCC 26115 / IMI 115107 / C 1557</strain>
    </source>
</reference>
<name>PHQ11_DIALO</name>
<protein>
    <recommendedName>
        <fullName evidence="5">Tyrosinase-like protein phomQ1</fullName>
        <ecNumber evidence="7">1.14.18.-</ecNumber>
    </recommendedName>
    <alternativeName>
        <fullName evidence="5">Phomopsin biosynthesis cluster protein Q1</fullName>
    </alternativeName>
</protein>